<keyword id="KW-1157">Cap snatching</keyword>
<keyword id="KW-0255">Endonuclease</keyword>
<keyword id="KW-1262">Eukaryotic host gene expression shutoff by virus</keyword>
<keyword id="KW-1191">Eukaryotic host transcription shutoff by virus</keyword>
<keyword id="KW-1035">Host cytoplasm</keyword>
<keyword id="KW-1190">Host gene expression shutoff by virus</keyword>
<keyword id="KW-1048">Host nucleus</keyword>
<keyword id="KW-0945">Host-virus interaction</keyword>
<keyword id="KW-0378">Hydrolase</keyword>
<keyword id="KW-1104">Inhibition of host RNA polymerase II by virus</keyword>
<keyword id="KW-0464">Manganese</keyword>
<keyword id="KW-0479">Metal-binding</keyword>
<keyword id="KW-0540">Nuclease</keyword>
<keyword id="KW-0597">Phosphoprotein</keyword>
<keyword id="KW-0688">Ribosomal frameshifting</keyword>
<accession>Q6DNY0</accession>
<comment type="function">
    <text evidence="2">Plays an essential role in viral RNA transcription and replication by forming the heterotrimeric polymerase complex together with PB1 and PB2 subunits. The complex transcribes viral mRNAs by using a unique mechanism called cap-snatching. It consists in the hijacking and cleavage of host capped pre-mRNAs. These short capped RNAs are then used as primers for viral mRNAs. The PB2 subunit is responsible for the binding of the 5' cap of cellular pre-mRNAs which are subsequently cleaved after 10-13 nucleotides by the PA subunit that carries the endonuclease activity.</text>
</comment>
<comment type="cofactor">
    <cofactor evidence="2">
        <name>Mn(2+)</name>
        <dbReference type="ChEBI" id="CHEBI:29035"/>
    </cofactor>
    <text evidence="2">Binds 2 manganese ions per subunit.</text>
</comment>
<comment type="subunit">
    <text evidence="1 2">Influenza RNA polymerase is composed of three subunits: PB1, PB2 and PA. Interacts (via C-terminus) with PB1 (via N-terminus).</text>
</comment>
<comment type="subcellular location">
    <subcellularLocation>
        <location evidence="2">Host cytoplasm</location>
    </subcellularLocation>
    <subcellularLocation>
        <location evidence="2">Host nucleus</location>
    </subcellularLocation>
    <text evidence="1 2">PB1 and PA are transported in the host nucleus as a complex.</text>
</comment>
<comment type="alternative products">
    <event type="ribosomal frameshifting"/>
    <isoform>
        <id>Q6DNY0-1</id>
        <name>PA</name>
        <sequence type="displayed"/>
    </isoform>
    <isoform>
        <id>P0CK92-1</id>
        <name>PA-X</name>
        <sequence type="external"/>
    </isoform>
</comment>
<comment type="PTM">
    <text evidence="1 2">Phosphorylated on serines and threonines by host kinases, including human casein kinase II.</text>
</comment>
<comment type="similarity">
    <text evidence="2">Belongs to the influenza viruses PA family.</text>
</comment>
<organismHost>
    <name type="scientific">Aves</name>
    <dbReference type="NCBI Taxonomy" id="8782"/>
</organismHost>
<organismHost>
    <name type="scientific">Felis catus</name>
    <name type="common">Cat</name>
    <name type="synonym">Felis silvestris catus</name>
    <dbReference type="NCBI Taxonomy" id="9685"/>
</organismHost>
<organismHost>
    <name type="scientific">Homo sapiens</name>
    <name type="common">Human</name>
    <dbReference type="NCBI Taxonomy" id="9606"/>
</organismHost>
<organismHost>
    <name type="scientific">Panthera pardus</name>
    <name type="common">Leopard</name>
    <name type="synonym">Felis pardus</name>
    <dbReference type="NCBI Taxonomy" id="9691"/>
</organismHost>
<organismHost>
    <name type="scientific">Panthera tigris</name>
    <name type="common">Tiger</name>
    <dbReference type="NCBI Taxonomy" id="9694"/>
</organismHost>
<organismHost>
    <name type="scientific">Sus scrofa</name>
    <name type="common">Pig</name>
    <dbReference type="NCBI Taxonomy" id="9823"/>
</organismHost>
<evidence type="ECO:0000250" key="1">
    <source>
        <dbReference type="UniProtKB" id="P03433"/>
    </source>
</evidence>
<evidence type="ECO:0000255" key="2">
    <source>
        <dbReference type="HAMAP-Rule" id="MF_04063"/>
    </source>
</evidence>
<feature type="chain" id="PRO_0000311133" description="Polymerase acidic protein">
    <location>
        <begin position="1"/>
        <end position="716"/>
    </location>
</feature>
<feature type="short sequence motif" description="Nuclear localization signal 1 (NLS1)" evidence="1 2">
    <location>
        <begin position="124"/>
        <end position="139"/>
    </location>
</feature>
<feature type="short sequence motif" description="Nuclear localization signal 2 (NLS2)" evidence="1 2">
    <location>
        <begin position="184"/>
        <end position="247"/>
    </location>
</feature>
<feature type="binding site" evidence="2">
    <location>
        <position position="41"/>
    </location>
    <ligand>
        <name>Mn(2+)</name>
        <dbReference type="ChEBI" id="CHEBI:29035"/>
        <label>1</label>
    </ligand>
</feature>
<feature type="binding site" evidence="2">
    <location>
        <position position="80"/>
    </location>
    <ligand>
        <name>Mn(2+)</name>
        <dbReference type="ChEBI" id="CHEBI:29035"/>
        <label>2</label>
    </ligand>
</feature>
<feature type="binding site" evidence="2">
    <location>
        <position position="108"/>
    </location>
    <ligand>
        <name>Mn(2+)</name>
        <dbReference type="ChEBI" id="CHEBI:29035"/>
        <label>1</label>
    </ligand>
</feature>
<feature type="binding site" evidence="2">
    <location>
        <position position="108"/>
    </location>
    <ligand>
        <name>Mn(2+)</name>
        <dbReference type="ChEBI" id="CHEBI:29035"/>
        <label>2</label>
    </ligand>
</feature>
<feature type="binding site" evidence="2">
    <location>
        <position position="119"/>
    </location>
    <ligand>
        <name>Mn(2+)</name>
        <dbReference type="ChEBI" id="CHEBI:29035"/>
        <label>1</label>
    </ligand>
</feature>
<feature type="binding site" evidence="2">
    <location>
        <position position="120"/>
    </location>
    <ligand>
        <name>Mn(2+)</name>
        <dbReference type="ChEBI" id="CHEBI:29035"/>
        <label>1</label>
    </ligand>
</feature>
<dbReference type="EC" id="3.1.-.-" evidence="2"/>
<dbReference type="EMBL" id="AY651622">
    <property type="protein sequence ID" value="AAT74498.1"/>
    <property type="molecule type" value="Genomic_RNA"/>
</dbReference>
<dbReference type="SMR" id="Q6DNY0"/>
<dbReference type="GO" id="GO:0030430">
    <property type="term" value="C:host cell cytoplasm"/>
    <property type="evidence" value="ECO:0007669"/>
    <property type="project" value="UniProtKB-SubCell"/>
</dbReference>
<dbReference type="GO" id="GO:0042025">
    <property type="term" value="C:host cell nucleus"/>
    <property type="evidence" value="ECO:0007669"/>
    <property type="project" value="UniProtKB-SubCell"/>
</dbReference>
<dbReference type="GO" id="GO:0004519">
    <property type="term" value="F:endonuclease activity"/>
    <property type="evidence" value="ECO:0007669"/>
    <property type="project" value="UniProtKB-KW"/>
</dbReference>
<dbReference type="GO" id="GO:0046872">
    <property type="term" value="F:metal ion binding"/>
    <property type="evidence" value="ECO:0007669"/>
    <property type="project" value="UniProtKB-KW"/>
</dbReference>
<dbReference type="GO" id="GO:0003723">
    <property type="term" value="F:RNA binding"/>
    <property type="evidence" value="ECO:0007669"/>
    <property type="project" value="UniProtKB-UniRule"/>
</dbReference>
<dbReference type="GO" id="GO:0075526">
    <property type="term" value="P:cap snatching"/>
    <property type="evidence" value="ECO:0007669"/>
    <property type="project" value="UniProtKB-UniRule"/>
</dbReference>
<dbReference type="GO" id="GO:0006351">
    <property type="term" value="P:DNA-templated transcription"/>
    <property type="evidence" value="ECO:0007669"/>
    <property type="project" value="UniProtKB-UniRule"/>
</dbReference>
<dbReference type="GO" id="GO:0039657">
    <property type="term" value="P:symbiont-mediated suppression of host gene expression"/>
    <property type="evidence" value="ECO:0007669"/>
    <property type="project" value="UniProtKB-KW"/>
</dbReference>
<dbReference type="GO" id="GO:0039523">
    <property type="term" value="P:symbiont-mediated suppression of host mRNA transcription via inhibition of RNA polymerase II activity"/>
    <property type="evidence" value="ECO:0007669"/>
    <property type="project" value="UniProtKB-UniRule"/>
</dbReference>
<dbReference type="GO" id="GO:0039694">
    <property type="term" value="P:viral RNA genome replication"/>
    <property type="evidence" value="ECO:0007669"/>
    <property type="project" value="InterPro"/>
</dbReference>
<dbReference type="GO" id="GO:0075523">
    <property type="term" value="P:viral translational frameshifting"/>
    <property type="evidence" value="ECO:0007669"/>
    <property type="project" value="UniProtKB-KW"/>
</dbReference>
<dbReference type="FunFam" id="3.40.91.90:FF:000001">
    <property type="entry name" value="Polymerase acidic protein"/>
    <property type="match status" value="1"/>
</dbReference>
<dbReference type="Gene3D" id="3.40.91.90">
    <property type="entry name" value="Influenza RNA-dependent RNA polymerase subunit PA, endonuclease domain"/>
    <property type="match status" value="1"/>
</dbReference>
<dbReference type="HAMAP" id="MF_04063">
    <property type="entry name" value="INFV_PA"/>
    <property type="match status" value="1"/>
</dbReference>
<dbReference type="InterPro" id="IPR037534">
    <property type="entry name" value="INFV_PA"/>
</dbReference>
<dbReference type="InterPro" id="IPR001009">
    <property type="entry name" value="PA/PA-X"/>
</dbReference>
<dbReference type="InterPro" id="IPR038372">
    <property type="entry name" value="PA/PA-X_sf"/>
</dbReference>
<dbReference type="Pfam" id="PF00603">
    <property type="entry name" value="Flu_PA"/>
    <property type="match status" value="1"/>
</dbReference>
<gene>
    <name evidence="2" type="primary">PA</name>
</gene>
<sequence>MEDFVRQCFNPMIVELAEKAMKEYGEDPKIETNKFAAICTHLEVCFMYSDFHFIDERGESIIVESGDPNALLKHRFEIIEGRDRTMAWTVVNSICNTTGVEKPKFLPDLYDYKENRFIEIGVTRREVHIYYLEKANKIKSEKTHIHIFSFTGEEMATKADYTLDEESRARIKTRLFTIRQEMASRGLWDSFRQSERGEETIEERFEITGTMRRLADQSLPPNFSSLENFRAYVDGFEPNGCIEGKLSQMSKEVNARIEPFLKTTPRPLRLPDGPPCSQRSKFLLMDALKLSIENPSHEGEGIPLYDAIKCMKTFFGWKEPNIIKPHEKGINPNYLLVWKQVLAELQDIENEEKIPKTKNMKKTSQLKWALGENMAPEKVDFEDCKDVSDLKQYDSDEPEPRSLASWIQSEFNKACELTDSSWIELDEIGEDVAPIEHIASMRRNYFTAEVSHCRATEYIMKGVYINTALLNASCAAMDDFQLIPMISKCRTKEGRRKTNLYGFIIKGRSHLRNDTDVVNFVSMEFSLTDPRLEPHKWEKYCVLEIGDMLLRTAIGQVSRPMFLYVRTNGTSKIKMKWGMEMRRCLLQSLQQIESMIEAESSVKEKDMTKEFFESKSETWPIGESPKGVEEGSIGKVCRTLLAKSVFNSLYASPQLEGFSAESRRLLLIVQALGDNLEPGTFDLGGLYEAIEECLINDPWVLLNASWFNSFLTHALR</sequence>
<name>PA_I02A1</name>
<proteinExistence type="inferred from homology"/>
<organism>
    <name type="scientific">Influenza A virus (strain A/Guinea fowl/Hong Kong/38/2002 H5N1 genotype X0)</name>
    <dbReference type="NCBI Taxonomy" id="284208"/>
    <lineage>
        <taxon>Viruses</taxon>
        <taxon>Riboviria</taxon>
        <taxon>Orthornavirae</taxon>
        <taxon>Negarnaviricota</taxon>
        <taxon>Polyploviricotina</taxon>
        <taxon>Insthoviricetes</taxon>
        <taxon>Articulavirales</taxon>
        <taxon>Orthomyxoviridae</taxon>
        <taxon>Alphainfluenzavirus</taxon>
        <taxon>Alphainfluenzavirus influenzae</taxon>
        <taxon>Influenza A virus</taxon>
    </lineage>
</organism>
<reference key="1">
    <citation type="journal article" date="2004" name="Nature">
        <title>Genesis of a highly pathogenic and potentially pandemic H5N1 influenza virus in eastern Asia.</title>
        <authorList>
            <person name="Li K.S."/>
            <person name="Guan Y."/>
            <person name="Wang J."/>
            <person name="Smith G.J.D."/>
            <person name="Xu K.M."/>
            <person name="Duan L."/>
            <person name="Rahardjo A.P."/>
            <person name="Puthavathana P."/>
            <person name="Buranathai C."/>
            <person name="Nguyen T.D."/>
            <person name="Estoepangestie A.T.S."/>
            <person name="Chaisingh A."/>
            <person name="Auewarakul P."/>
            <person name="Long H.T."/>
            <person name="Hanh N.T.H."/>
            <person name="Webby R.J."/>
            <person name="Poon L.L.M."/>
            <person name="Chen H."/>
            <person name="Shortridge K.F."/>
            <person name="Yuen K.Y."/>
            <person name="Webster R.G."/>
            <person name="Peiris J.S.M."/>
        </authorList>
    </citation>
    <scope>NUCLEOTIDE SEQUENCE [GENOMIC RNA]</scope>
</reference>
<protein>
    <recommendedName>
        <fullName evidence="2">Polymerase acidic protein</fullName>
        <ecNumber evidence="2">3.1.-.-</ecNumber>
    </recommendedName>
    <alternativeName>
        <fullName evidence="2">RNA-directed RNA polymerase subunit P2</fullName>
    </alternativeName>
</protein>